<reference key="1">
    <citation type="submission" date="2006-12" db="EMBL/GenBank/DDBJ databases">
        <title>Complete sequence of chromosome 1 of Acidovorax sp. JS42.</title>
        <authorList>
            <person name="Copeland A."/>
            <person name="Lucas S."/>
            <person name="Lapidus A."/>
            <person name="Barry K."/>
            <person name="Detter J.C."/>
            <person name="Glavina del Rio T."/>
            <person name="Dalin E."/>
            <person name="Tice H."/>
            <person name="Pitluck S."/>
            <person name="Chertkov O."/>
            <person name="Brettin T."/>
            <person name="Bruce D."/>
            <person name="Han C."/>
            <person name="Tapia R."/>
            <person name="Gilna P."/>
            <person name="Schmutz J."/>
            <person name="Larimer F."/>
            <person name="Land M."/>
            <person name="Hauser L."/>
            <person name="Kyrpides N."/>
            <person name="Kim E."/>
            <person name="Stahl D."/>
            <person name="Richardson P."/>
        </authorList>
    </citation>
    <scope>NUCLEOTIDE SEQUENCE [LARGE SCALE GENOMIC DNA]</scope>
    <source>
        <strain>JS42</strain>
    </source>
</reference>
<name>TSAD_ACISJ</name>
<protein>
    <recommendedName>
        <fullName evidence="1">tRNA N6-adenosine threonylcarbamoyltransferase</fullName>
        <ecNumber evidence="1">2.3.1.234</ecNumber>
    </recommendedName>
    <alternativeName>
        <fullName evidence="1">N6-L-threonylcarbamoyladenine synthase</fullName>
        <shortName evidence="1">t(6)A synthase</shortName>
    </alternativeName>
    <alternativeName>
        <fullName evidence="1">t(6)A37 threonylcarbamoyladenosine biosynthesis protein TsaD</fullName>
    </alternativeName>
    <alternativeName>
        <fullName evidence="1">tRNA threonylcarbamoyladenosine biosynthesis protein TsaD</fullName>
    </alternativeName>
</protein>
<evidence type="ECO:0000255" key="1">
    <source>
        <dbReference type="HAMAP-Rule" id="MF_01445"/>
    </source>
</evidence>
<evidence type="ECO:0000305" key="2"/>
<organism>
    <name type="scientific">Acidovorax sp. (strain JS42)</name>
    <dbReference type="NCBI Taxonomy" id="232721"/>
    <lineage>
        <taxon>Bacteria</taxon>
        <taxon>Pseudomonadati</taxon>
        <taxon>Pseudomonadota</taxon>
        <taxon>Betaproteobacteria</taxon>
        <taxon>Burkholderiales</taxon>
        <taxon>Comamonadaceae</taxon>
        <taxon>Acidovorax</taxon>
    </lineage>
</organism>
<comment type="function">
    <text evidence="1">Required for the formation of a threonylcarbamoyl group on adenosine at position 37 (t(6)A37) in tRNAs that read codons beginning with adenine. Is involved in the transfer of the threonylcarbamoyl moiety of threonylcarbamoyl-AMP (TC-AMP) to the N6 group of A37, together with TsaE and TsaB. TsaD likely plays a direct catalytic role in this reaction.</text>
</comment>
<comment type="catalytic activity">
    <reaction evidence="1">
        <text>L-threonylcarbamoyladenylate + adenosine(37) in tRNA = N(6)-L-threonylcarbamoyladenosine(37) in tRNA + AMP + H(+)</text>
        <dbReference type="Rhea" id="RHEA:37059"/>
        <dbReference type="Rhea" id="RHEA-COMP:10162"/>
        <dbReference type="Rhea" id="RHEA-COMP:10163"/>
        <dbReference type="ChEBI" id="CHEBI:15378"/>
        <dbReference type="ChEBI" id="CHEBI:73682"/>
        <dbReference type="ChEBI" id="CHEBI:74411"/>
        <dbReference type="ChEBI" id="CHEBI:74418"/>
        <dbReference type="ChEBI" id="CHEBI:456215"/>
        <dbReference type="EC" id="2.3.1.234"/>
    </reaction>
</comment>
<comment type="cofactor">
    <cofactor evidence="1">
        <name>Fe(2+)</name>
        <dbReference type="ChEBI" id="CHEBI:29033"/>
    </cofactor>
    <text evidence="1">Binds 1 Fe(2+) ion per subunit.</text>
</comment>
<comment type="subcellular location">
    <subcellularLocation>
        <location evidence="1">Cytoplasm</location>
    </subcellularLocation>
</comment>
<comment type="similarity">
    <text evidence="1">Belongs to the KAE1 / TsaD family.</text>
</comment>
<comment type="sequence caution" evidence="2">
    <conflict type="erroneous initiation">
        <sequence resource="EMBL-CDS" id="ABM42969"/>
    </conflict>
</comment>
<proteinExistence type="inferred from homology"/>
<feature type="chain" id="PRO_0000303244" description="tRNA N6-adenosine threonylcarbamoyltransferase">
    <location>
        <begin position="1"/>
        <end position="349"/>
    </location>
</feature>
<feature type="binding site" evidence="1">
    <location>
        <position position="118"/>
    </location>
    <ligand>
        <name>Fe cation</name>
        <dbReference type="ChEBI" id="CHEBI:24875"/>
    </ligand>
</feature>
<feature type="binding site" evidence="1">
    <location>
        <position position="122"/>
    </location>
    <ligand>
        <name>Fe cation</name>
        <dbReference type="ChEBI" id="CHEBI:24875"/>
    </ligand>
</feature>
<feature type="binding site" evidence="1">
    <location>
        <begin position="141"/>
        <end position="145"/>
    </location>
    <ligand>
        <name>substrate</name>
    </ligand>
</feature>
<feature type="binding site" evidence="1">
    <location>
        <position position="174"/>
    </location>
    <ligand>
        <name>substrate</name>
    </ligand>
</feature>
<feature type="binding site" evidence="1">
    <location>
        <position position="187"/>
    </location>
    <ligand>
        <name>substrate</name>
    </ligand>
</feature>
<feature type="binding site" evidence="1">
    <location>
        <position position="280"/>
    </location>
    <ligand>
        <name>substrate</name>
    </ligand>
</feature>
<feature type="binding site" evidence="1">
    <location>
        <position position="308"/>
    </location>
    <ligand>
        <name>Fe cation</name>
        <dbReference type="ChEBI" id="CHEBI:24875"/>
    </ligand>
</feature>
<gene>
    <name evidence="1" type="primary">tsaD</name>
    <name type="synonym">gcp</name>
    <name type="ordered locus">Ajs_2828</name>
</gene>
<sequence length="349" mass="36677">MSQLILGIESSCDETGVALVRAGEGGAVPVLLAHALHSQIDMHQAYGGVVPELASRDHIRRVLPLTREVLRESGERLEDVDVVAYTRGPGLAGALLVGAGVACALGAALDKPVLGVHHLEGHLLSPFLSSDPPEFPFVALLVSGGHTQLMRVEGVGRYEILGETIDDAAGEAFDKSAKLMGLGYPGGPALSRLAEQGSATAFKLPRPLLHSGDLDFSFAGLKTAVLTQAKKLGDELTARKADLAASTEAAIVEVLVKKTLAALQKTGLQRVVVAGGVGANRHLRAQLNAACARAKVRVHYPELHLCTDNGAMIAMAAAMRLQAGQQQPNRDYAFDVKPRWPLDAITLAA</sequence>
<keyword id="KW-0012">Acyltransferase</keyword>
<keyword id="KW-0963">Cytoplasm</keyword>
<keyword id="KW-0408">Iron</keyword>
<keyword id="KW-0479">Metal-binding</keyword>
<keyword id="KW-0808">Transferase</keyword>
<keyword id="KW-0819">tRNA processing</keyword>
<dbReference type="EC" id="2.3.1.234" evidence="1"/>
<dbReference type="EMBL" id="CP000539">
    <property type="protein sequence ID" value="ABM42969.1"/>
    <property type="status" value="ALT_INIT"/>
    <property type="molecule type" value="Genomic_DNA"/>
</dbReference>
<dbReference type="SMR" id="A1W9P4"/>
<dbReference type="STRING" id="232721.Ajs_2828"/>
<dbReference type="KEGG" id="ajs:Ajs_2828"/>
<dbReference type="eggNOG" id="COG0533">
    <property type="taxonomic scope" value="Bacteria"/>
</dbReference>
<dbReference type="HOGENOM" id="CLU_023208_0_2_4"/>
<dbReference type="Proteomes" id="UP000000645">
    <property type="component" value="Chromosome"/>
</dbReference>
<dbReference type="GO" id="GO:0005737">
    <property type="term" value="C:cytoplasm"/>
    <property type="evidence" value="ECO:0007669"/>
    <property type="project" value="UniProtKB-SubCell"/>
</dbReference>
<dbReference type="GO" id="GO:0005506">
    <property type="term" value="F:iron ion binding"/>
    <property type="evidence" value="ECO:0007669"/>
    <property type="project" value="UniProtKB-UniRule"/>
</dbReference>
<dbReference type="GO" id="GO:0061711">
    <property type="term" value="F:N(6)-L-threonylcarbamoyladenine synthase activity"/>
    <property type="evidence" value="ECO:0007669"/>
    <property type="project" value="UniProtKB-EC"/>
</dbReference>
<dbReference type="GO" id="GO:0002949">
    <property type="term" value="P:tRNA threonylcarbamoyladenosine modification"/>
    <property type="evidence" value="ECO:0007669"/>
    <property type="project" value="UniProtKB-UniRule"/>
</dbReference>
<dbReference type="CDD" id="cd24133">
    <property type="entry name" value="ASKHA_NBD_TsaD_bac"/>
    <property type="match status" value="1"/>
</dbReference>
<dbReference type="FunFam" id="3.30.420.40:FF:000012">
    <property type="entry name" value="tRNA N6-adenosine threonylcarbamoyltransferase"/>
    <property type="match status" value="1"/>
</dbReference>
<dbReference type="FunFam" id="3.30.420.40:FF:000040">
    <property type="entry name" value="tRNA N6-adenosine threonylcarbamoyltransferase"/>
    <property type="match status" value="1"/>
</dbReference>
<dbReference type="Gene3D" id="3.30.420.40">
    <property type="match status" value="2"/>
</dbReference>
<dbReference type="HAMAP" id="MF_01445">
    <property type="entry name" value="TsaD"/>
    <property type="match status" value="1"/>
</dbReference>
<dbReference type="InterPro" id="IPR043129">
    <property type="entry name" value="ATPase_NBD"/>
</dbReference>
<dbReference type="InterPro" id="IPR000905">
    <property type="entry name" value="Gcp-like_dom"/>
</dbReference>
<dbReference type="InterPro" id="IPR017861">
    <property type="entry name" value="KAE1/TsaD"/>
</dbReference>
<dbReference type="InterPro" id="IPR017860">
    <property type="entry name" value="Peptidase_M22_CS"/>
</dbReference>
<dbReference type="InterPro" id="IPR022450">
    <property type="entry name" value="TsaD"/>
</dbReference>
<dbReference type="NCBIfam" id="TIGR00329">
    <property type="entry name" value="gcp_kae1"/>
    <property type="match status" value="1"/>
</dbReference>
<dbReference type="NCBIfam" id="TIGR03723">
    <property type="entry name" value="T6A_TsaD_YgjD"/>
    <property type="match status" value="1"/>
</dbReference>
<dbReference type="PANTHER" id="PTHR11735">
    <property type="entry name" value="TRNA N6-ADENOSINE THREONYLCARBAMOYLTRANSFERASE"/>
    <property type="match status" value="1"/>
</dbReference>
<dbReference type="PANTHER" id="PTHR11735:SF6">
    <property type="entry name" value="TRNA N6-ADENOSINE THREONYLCARBAMOYLTRANSFERASE, MITOCHONDRIAL"/>
    <property type="match status" value="1"/>
</dbReference>
<dbReference type="Pfam" id="PF00814">
    <property type="entry name" value="TsaD"/>
    <property type="match status" value="1"/>
</dbReference>
<dbReference type="PRINTS" id="PR00789">
    <property type="entry name" value="OSIALOPTASE"/>
</dbReference>
<dbReference type="SUPFAM" id="SSF53067">
    <property type="entry name" value="Actin-like ATPase domain"/>
    <property type="match status" value="2"/>
</dbReference>
<dbReference type="PROSITE" id="PS01016">
    <property type="entry name" value="GLYCOPROTEASE"/>
    <property type="match status" value="1"/>
</dbReference>
<accession>A1W9P4</accession>